<reference key="1">
    <citation type="journal article" date="2002" name="Nature">
        <title>The genome sequence of Schizosaccharomyces pombe.</title>
        <authorList>
            <person name="Wood V."/>
            <person name="Gwilliam R."/>
            <person name="Rajandream M.A."/>
            <person name="Lyne M.H."/>
            <person name="Lyne R."/>
            <person name="Stewart A."/>
            <person name="Sgouros J.G."/>
            <person name="Peat N."/>
            <person name="Hayles J."/>
            <person name="Baker S.G."/>
            <person name="Basham D."/>
            <person name="Bowman S."/>
            <person name="Brooks K."/>
            <person name="Brown D."/>
            <person name="Brown S."/>
            <person name="Chillingworth T."/>
            <person name="Churcher C.M."/>
            <person name="Collins M."/>
            <person name="Connor R."/>
            <person name="Cronin A."/>
            <person name="Davis P."/>
            <person name="Feltwell T."/>
            <person name="Fraser A."/>
            <person name="Gentles S."/>
            <person name="Goble A."/>
            <person name="Hamlin N."/>
            <person name="Harris D.E."/>
            <person name="Hidalgo J."/>
            <person name="Hodgson G."/>
            <person name="Holroyd S."/>
            <person name="Hornsby T."/>
            <person name="Howarth S."/>
            <person name="Huckle E.J."/>
            <person name="Hunt S."/>
            <person name="Jagels K."/>
            <person name="James K.D."/>
            <person name="Jones L."/>
            <person name="Jones M."/>
            <person name="Leather S."/>
            <person name="McDonald S."/>
            <person name="McLean J."/>
            <person name="Mooney P."/>
            <person name="Moule S."/>
            <person name="Mungall K.L."/>
            <person name="Murphy L.D."/>
            <person name="Niblett D."/>
            <person name="Odell C."/>
            <person name="Oliver K."/>
            <person name="O'Neil S."/>
            <person name="Pearson D."/>
            <person name="Quail M.A."/>
            <person name="Rabbinowitsch E."/>
            <person name="Rutherford K.M."/>
            <person name="Rutter S."/>
            <person name="Saunders D."/>
            <person name="Seeger K."/>
            <person name="Sharp S."/>
            <person name="Skelton J."/>
            <person name="Simmonds M.N."/>
            <person name="Squares R."/>
            <person name="Squares S."/>
            <person name="Stevens K."/>
            <person name="Taylor K."/>
            <person name="Taylor R.G."/>
            <person name="Tivey A."/>
            <person name="Walsh S.V."/>
            <person name="Warren T."/>
            <person name="Whitehead S."/>
            <person name="Woodward J.R."/>
            <person name="Volckaert G."/>
            <person name="Aert R."/>
            <person name="Robben J."/>
            <person name="Grymonprez B."/>
            <person name="Weltjens I."/>
            <person name="Vanstreels E."/>
            <person name="Rieger M."/>
            <person name="Schaefer M."/>
            <person name="Mueller-Auer S."/>
            <person name="Gabel C."/>
            <person name="Fuchs M."/>
            <person name="Duesterhoeft A."/>
            <person name="Fritzc C."/>
            <person name="Holzer E."/>
            <person name="Moestl D."/>
            <person name="Hilbert H."/>
            <person name="Borzym K."/>
            <person name="Langer I."/>
            <person name="Beck A."/>
            <person name="Lehrach H."/>
            <person name="Reinhardt R."/>
            <person name="Pohl T.M."/>
            <person name="Eger P."/>
            <person name="Zimmermann W."/>
            <person name="Wedler H."/>
            <person name="Wambutt R."/>
            <person name="Purnelle B."/>
            <person name="Goffeau A."/>
            <person name="Cadieu E."/>
            <person name="Dreano S."/>
            <person name="Gloux S."/>
            <person name="Lelaure V."/>
            <person name="Mottier S."/>
            <person name="Galibert F."/>
            <person name="Aves S.J."/>
            <person name="Xiang Z."/>
            <person name="Hunt C."/>
            <person name="Moore K."/>
            <person name="Hurst S.M."/>
            <person name="Lucas M."/>
            <person name="Rochet M."/>
            <person name="Gaillardin C."/>
            <person name="Tallada V.A."/>
            <person name="Garzon A."/>
            <person name="Thode G."/>
            <person name="Daga R.R."/>
            <person name="Cruzado L."/>
            <person name="Jimenez J."/>
            <person name="Sanchez M."/>
            <person name="del Rey F."/>
            <person name="Benito J."/>
            <person name="Dominguez A."/>
            <person name="Revuelta J.L."/>
            <person name="Moreno S."/>
            <person name="Armstrong J."/>
            <person name="Forsburg S.L."/>
            <person name="Cerutti L."/>
            <person name="Lowe T."/>
            <person name="McCombie W.R."/>
            <person name="Paulsen I."/>
            <person name="Potashkin J."/>
            <person name="Shpakovski G.V."/>
            <person name="Ussery D."/>
            <person name="Barrell B.G."/>
            <person name="Nurse P."/>
        </authorList>
    </citation>
    <scope>NUCLEOTIDE SEQUENCE [LARGE SCALE GENOMIC DNA]</scope>
    <source>
        <strain>972 / ATCC 24843</strain>
    </source>
</reference>
<reference key="2">
    <citation type="journal article" date="2006" name="Nat. Biotechnol.">
        <title>ORFeome cloning and global analysis of protein localization in the fission yeast Schizosaccharomyces pombe.</title>
        <authorList>
            <person name="Matsuyama A."/>
            <person name="Arai R."/>
            <person name="Yashiroda Y."/>
            <person name="Shirai A."/>
            <person name="Kamata A."/>
            <person name="Sekido S."/>
            <person name="Kobayashi Y."/>
            <person name="Hashimoto A."/>
            <person name="Hamamoto M."/>
            <person name="Hiraoka Y."/>
            <person name="Horinouchi S."/>
            <person name="Yoshida M."/>
        </authorList>
    </citation>
    <scope>SUBCELLULAR LOCATION [LARGE SCALE ANALYSIS]</scope>
</reference>
<reference key="3">
    <citation type="journal article" date="2008" name="J. Proteome Res.">
        <title>Phosphoproteome analysis of fission yeast.</title>
        <authorList>
            <person name="Wilson-Grady J.T."/>
            <person name="Villen J."/>
            <person name="Gygi S.P."/>
        </authorList>
    </citation>
    <scope>PHOSPHORYLATION [LARGE SCALE ANALYSIS] AT SER-14</scope>
    <scope>IDENTIFICATION BY MASS SPECTROMETRY</scope>
</reference>
<comment type="subcellular location">
    <subcellularLocation>
        <location evidence="2">Nucleus</location>
        <location evidence="2">Nucleolus</location>
    </subcellularLocation>
</comment>
<feature type="chain" id="PRO_0000351432" description="Uncharacterized nucleolar protein C630.06c">
    <location>
        <begin position="1"/>
        <end position="188"/>
    </location>
</feature>
<feature type="region of interest" description="Disordered" evidence="1">
    <location>
        <begin position="165"/>
        <end position="188"/>
    </location>
</feature>
<feature type="compositionally biased region" description="Basic residues" evidence="1">
    <location>
        <begin position="171"/>
        <end position="188"/>
    </location>
</feature>
<feature type="modified residue" description="Phosphoserine" evidence="3">
    <location>
        <position position="14"/>
    </location>
</feature>
<proteinExistence type="evidence at protein level"/>
<name>YKI6_SCHPO</name>
<sequence length="188" mass="22280">METVKVTRKDLLLSPENKEIDSLDDVSALLSQRLSNVFEFSIASEEVQSDEVFEDTYPNDDQATFNLFSDVNTVVTKVTEPSIKNSRPLNYYILEDSPERQRQLQASVFTYDQLMKAKEEKWPACQKLHKVVSIKKEESKHRRRPSKKRRIRMKLLREKEEQLKRQAMAAKRNRFRKNVRKLPNKKKH</sequence>
<evidence type="ECO:0000256" key="1">
    <source>
        <dbReference type="SAM" id="MobiDB-lite"/>
    </source>
</evidence>
<evidence type="ECO:0000269" key="2">
    <source>
    </source>
</evidence>
<evidence type="ECO:0000269" key="3">
    <source>
    </source>
</evidence>
<gene>
    <name type="ORF">SPAC630.06c</name>
</gene>
<accession>Q9UUH6</accession>
<protein>
    <recommendedName>
        <fullName>Uncharacterized nucleolar protein C630.06c</fullName>
    </recommendedName>
</protein>
<keyword id="KW-0539">Nucleus</keyword>
<keyword id="KW-0597">Phosphoprotein</keyword>
<keyword id="KW-1185">Reference proteome</keyword>
<dbReference type="EMBL" id="CU329670">
    <property type="protein sequence ID" value="CAB52728.1"/>
    <property type="molecule type" value="Genomic_DNA"/>
</dbReference>
<dbReference type="PIR" id="T38984">
    <property type="entry name" value="T38984"/>
</dbReference>
<dbReference type="RefSeq" id="NP_592901.1">
    <property type="nucleotide sequence ID" value="NM_001018301.2"/>
</dbReference>
<dbReference type="BioGRID" id="279790">
    <property type="interactions" value="10"/>
</dbReference>
<dbReference type="STRING" id="284812.Q9UUH6"/>
<dbReference type="iPTMnet" id="Q9UUH6"/>
<dbReference type="PaxDb" id="4896-SPAC630.06c.1"/>
<dbReference type="EnsemblFungi" id="SPAC630.06c.1">
    <property type="protein sequence ID" value="SPAC630.06c.1:pep"/>
    <property type="gene ID" value="SPAC630.06c"/>
</dbReference>
<dbReference type="KEGG" id="spo:2543368"/>
<dbReference type="PomBase" id="SPAC630.06c"/>
<dbReference type="VEuPathDB" id="FungiDB:SPAC630.06c"/>
<dbReference type="HOGENOM" id="CLU_1441818_0_0_1"/>
<dbReference type="InParanoid" id="Q9UUH6"/>
<dbReference type="OMA" id="NVAFNLF"/>
<dbReference type="PRO" id="PR:Q9UUH6"/>
<dbReference type="Proteomes" id="UP000002485">
    <property type="component" value="Chromosome I"/>
</dbReference>
<dbReference type="GO" id="GO:0005730">
    <property type="term" value="C:nucleolus"/>
    <property type="evidence" value="ECO:0007005"/>
    <property type="project" value="PomBase"/>
</dbReference>
<dbReference type="GO" id="GO:0005634">
    <property type="term" value="C:nucleus"/>
    <property type="evidence" value="ECO:0007005"/>
    <property type="project" value="PomBase"/>
</dbReference>
<dbReference type="InterPro" id="IPR018555">
    <property type="entry name" value="DUF2011"/>
</dbReference>
<dbReference type="Pfam" id="PF09428">
    <property type="entry name" value="DUF2011"/>
    <property type="match status" value="1"/>
</dbReference>
<organism>
    <name type="scientific">Schizosaccharomyces pombe (strain 972 / ATCC 24843)</name>
    <name type="common">Fission yeast</name>
    <dbReference type="NCBI Taxonomy" id="284812"/>
    <lineage>
        <taxon>Eukaryota</taxon>
        <taxon>Fungi</taxon>
        <taxon>Dikarya</taxon>
        <taxon>Ascomycota</taxon>
        <taxon>Taphrinomycotina</taxon>
        <taxon>Schizosaccharomycetes</taxon>
        <taxon>Schizosaccharomycetales</taxon>
        <taxon>Schizosaccharomycetaceae</taxon>
        <taxon>Schizosaccharomyces</taxon>
    </lineage>
</organism>